<organism>
    <name type="scientific">Pseudomonas fluorescens (strain SBW25)</name>
    <dbReference type="NCBI Taxonomy" id="216595"/>
    <lineage>
        <taxon>Bacteria</taxon>
        <taxon>Pseudomonadati</taxon>
        <taxon>Pseudomonadota</taxon>
        <taxon>Gammaproteobacteria</taxon>
        <taxon>Pseudomonadales</taxon>
        <taxon>Pseudomonadaceae</taxon>
        <taxon>Pseudomonas</taxon>
    </lineage>
</organism>
<comment type="function">
    <text evidence="1">Produces ATP from ADP in the presence of a proton gradient across the membrane. The alpha chain is a regulatory subunit.</text>
</comment>
<comment type="catalytic activity">
    <reaction evidence="1">
        <text>ATP + H2O + 4 H(+)(in) = ADP + phosphate + 5 H(+)(out)</text>
        <dbReference type="Rhea" id="RHEA:57720"/>
        <dbReference type="ChEBI" id="CHEBI:15377"/>
        <dbReference type="ChEBI" id="CHEBI:15378"/>
        <dbReference type="ChEBI" id="CHEBI:30616"/>
        <dbReference type="ChEBI" id="CHEBI:43474"/>
        <dbReference type="ChEBI" id="CHEBI:456216"/>
        <dbReference type="EC" id="7.1.2.2"/>
    </reaction>
</comment>
<comment type="subunit">
    <text evidence="1">F-type ATPases have 2 components, CF(1) - the catalytic core - and CF(0) - the membrane proton channel. CF(1) has five subunits: alpha(3), beta(3), gamma(1), delta(1), epsilon(1). CF(0) has three main subunits: a(1), b(2) and c(9-12). The alpha and beta chains form an alternating ring which encloses part of the gamma chain. CF(1) is attached to CF(0) by a central stalk formed by the gamma and epsilon chains, while a peripheral stalk is formed by the delta and b chains.</text>
</comment>
<comment type="subcellular location">
    <subcellularLocation>
        <location evidence="1">Cell inner membrane</location>
        <topology evidence="1">Peripheral membrane protein</topology>
    </subcellularLocation>
</comment>
<comment type="similarity">
    <text evidence="1">Belongs to the ATPase alpha/beta chains family.</text>
</comment>
<keyword id="KW-0066">ATP synthesis</keyword>
<keyword id="KW-0067">ATP-binding</keyword>
<keyword id="KW-0997">Cell inner membrane</keyword>
<keyword id="KW-1003">Cell membrane</keyword>
<keyword id="KW-0139">CF(1)</keyword>
<keyword id="KW-0375">Hydrogen ion transport</keyword>
<keyword id="KW-0406">Ion transport</keyword>
<keyword id="KW-0472">Membrane</keyword>
<keyword id="KW-0547">Nucleotide-binding</keyword>
<keyword id="KW-1278">Translocase</keyword>
<keyword id="KW-0813">Transport</keyword>
<dbReference type="EC" id="7.1.2.2" evidence="1"/>
<dbReference type="EMBL" id="AM181176">
    <property type="protein sequence ID" value="CAY53727.1"/>
    <property type="molecule type" value="Genomic_DNA"/>
</dbReference>
<dbReference type="RefSeq" id="WP_003177064.1">
    <property type="nucleotide sequence ID" value="NC_012660.1"/>
</dbReference>
<dbReference type="SMR" id="C3K1E8"/>
<dbReference type="STRING" id="294.SRM1_00043"/>
<dbReference type="GeneID" id="93467751"/>
<dbReference type="eggNOG" id="COG0056">
    <property type="taxonomic scope" value="Bacteria"/>
</dbReference>
<dbReference type="HOGENOM" id="CLU_010091_2_1_6"/>
<dbReference type="OrthoDB" id="9803053at2"/>
<dbReference type="GO" id="GO:0005886">
    <property type="term" value="C:plasma membrane"/>
    <property type="evidence" value="ECO:0007669"/>
    <property type="project" value="UniProtKB-SubCell"/>
</dbReference>
<dbReference type="GO" id="GO:0045259">
    <property type="term" value="C:proton-transporting ATP synthase complex"/>
    <property type="evidence" value="ECO:0007669"/>
    <property type="project" value="UniProtKB-KW"/>
</dbReference>
<dbReference type="GO" id="GO:0043531">
    <property type="term" value="F:ADP binding"/>
    <property type="evidence" value="ECO:0007669"/>
    <property type="project" value="TreeGrafter"/>
</dbReference>
<dbReference type="GO" id="GO:0005524">
    <property type="term" value="F:ATP binding"/>
    <property type="evidence" value="ECO:0007669"/>
    <property type="project" value="UniProtKB-UniRule"/>
</dbReference>
<dbReference type="GO" id="GO:0046933">
    <property type="term" value="F:proton-transporting ATP synthase activity, rotational mechanism"/>
    <property type="evidence" value="ECO:0007669"/>
    <property type="project" value="UniProtKB-UniRule"/>
</dbReference>
<dbReference type="CDD" id="cd18113">
    <property type="entry name" value="ATP-synt_F1_alpha_C"/>
    <property type="match status" value="1"/>
</dbReference>
<dbReference type="CDD" id="cd18116">
    <property type="entry name" value="ATP-synt_F1_alpha_N"/>
    <property type="match status" value="1"/>
</dbReference>
<dbReference type="CDD" id="cd01132">
    <property type="entry name" value="F1-ATPase_alpha_CD"/>
    <property type="match status" value="1"/>
</dbReference>
<dbReference type="FunFam" id="1.20.150.20:FF:000001">
    <property type="entry name" value="ATP synthase subunit alpha"/>
    <property type="match status" value="1"/>
</dbReference>
<dbReference type="FunFam" id="2.40.30.20:FF:000001">
    <property type="entry name" value="ATP synthase subunit alpha"/>
    <property type="match status" value="1"/>
</dbReference>
<dbReference type="FunFam" id="3.40.50.300:FF:000002">
    <property type="entry name" value="ATP synthase subunit alpha"/>
    <property type="match status" value="1"/>
</dbReference>
<dbReference type="Gene3D" id="2.40.30.20">
    <property type="match status" value="1"/>
</dbReference>
<dbReference type="Gene3D" id="1.20.150.20">
    <property type="entry name" value="ATP synthase alpha/beta chain, C-terminal domain"/>
    <property type="match status" value="1"/>
</dbReference>
<dbReference type="Gene3D" id="3.40.50.300">
    <property type="entry name" value="P-loop containing nucleotide triphosphate hydrolases"/>
    <property type="match status" value="1"/>
</dbReference>
<dbReference type="HAMAP" id="MF_01346">
    <property type="entry name" value="ATP_synth_alpha_bact"/>
    <property type="match status" value="1"/>
</dbReference>
<dbReference type="InterPro" id="IPR023366">
    <property type="entry name" value="ATP_synth_asu-like_sf"/>
</dbReference>
<dbReference type="InterPro" id="IPR000793">
    <property type="entry name" value="ATP_synth_asu_C"/>
</dbReference>
<dbReference type="InterPro" id="IPR038376">
    <property type="entry name" value="ATP_synth_asu_C_sf"/>
</dbReference>
<dbReference type="InterPro" id="IPR033732">
    <property type="entry name" value="ATP_synth_F1_a_nt-bd_dom"/>
</dbReference>
<dbReference type="InterPro" id="IPR005294">
    <property type="entry name" value="ATP_synth_F1_asu"/>
</dbReference>
<dbReference type="InterPro" id="IPR020003">
    <property type="entry name" value="ATPase_a/bsu_AS"/>
</dbReference>
<dbReference type="InterPro" id="IPR004100">
    <property type="entry name" value="ATPase_F1/V1/A1_a/bsu_N"/>
</dbReference>
<dbReference type="InterPro" id="IPR036121">
    <property type="entry name" value="ATPase_F1/V1/A1_a/bsu_N_sf"/>
</dbReference>
<dbReference type="InterPro" id="IPR000194">
    <property type="entry name" value="ATPase_F1/V1/A1_a/bsu_nucl-bd"/>
</dbReference>
<dbReference type="InterPro" id="IPR027417">
    <property type="entry name" value="P-loop_NTPase"/>
</dbReference>
<dbReference type="NCBIfam" id="TIGR00962">
    <property type="entry name" value="atpA"/>
    <property type="match status" value="1"/>
</dbReference>
<dbReference type="NCBIfam" id="NF009884">
    <property type="entry name" value="PRK13343.1"/>
    <property type="match status" value="1"/>
</dbReference>
<dbReference type="PANTHER" id="PTHR48082">
    <property type="entry name" value="ATP SYNTHASE SUBUNIT ALPHA, MITOCHONDRIAL"/>
    <property type="match status" value="1"/>
</dbReference>
<dbReference type="PANTHER" id="PTHR48082:SF2">
    <property type="entry name" value="ATP SYNTHASE SUBUNIT ALPHA, MITOCHONDRIAL"/>
    <property type="match status" value="1"/>
</dbReference>
<dbReference type="Pfam" id="PF00006">
    <property type="entry name" value="ATP-synt_ab"/>
    <property type="match status" value="1"/>
</dbReference>
<dbReference type="Pfam" id="PF00306">
    <property type="entry name" value="ATP-synt_ab_C"/>
    <property type="match status" value="1"/>
</dbReference>
<dbReference type="Pfam" id="PF02874">
    <property type="entry name" value="ATP-synt_ab_N"/>
    <property type="match status" value="1"/>
</dbReference>
<dbReference type="SUPFAM" id="SSF47917">
    <property type="entry name" value="C-terminal domain of alpha and beta subunits of F1 ATP synthase"/>
    <property type="match status" value="1"/>
</dbReference>
<dbReference type="SUPFAM" id="SSF50615">
    <property type="entry name" value="N-terminal domain of alpha and beta subunits of F1 ATP synthase"/>
    <property type="match status" value="1"/>
</dbReference>
<dbReference type="SUPFAM" id="SSF52540">
    <property type="entry name" value="P-loop containing nucleoside triphosphate hydrolases"/>
    <property type="match status" value="1"/>
</dbReference>
<dbReference type="PROSITE" id="PS00152">
    <property type="entry name" value="ATPASE_ALPHA_BETA"/>
    <property type="match status" value="1"/>
</dbReference>
<sequence>MQQLNPSEISEIIKGRIDKLDVTSQARNEGTVVSVSDGIVRIHGLADVMYGEMIEFPGGVYGMALNLEQDSVGAVVLGAYTSLAEGMSAKCTGRILEVPVGKELLGRVVDALGNPVDGKGPLGNTETDAVEKVAPGVIWRKSVDQPVQTGYKAVDAMIPVGRGQRELIIGDRQIGKTALAIDAIINQKNSGIFCVYVAIGQKQSTIANVVRKLEENGALANTIIVAASASESPALQFLAPYSGCTMGEFFRDRGEDALIVYDDLSKQAVAYRQISLLLRRPPGREAYPGDVFYLHSRLLERASRVSEEYVEKFTNGAVTGKTGSLTALPIIETQAGDVSAFVPTNVISITDGQIFLESAMFNSGIRPAVNAGVSVSRVGGAAQTKIIKKLSGGIRTALAQYRELAAFAQFASDLDEATRKQLEHGQRVTELMKQKQYAPMSIADMALSLYAAERGFLTDVEIAKVGSFEQALIAYFNRDHAELMAKINVKGDFNDDIDAGMKAGIEKFKATQTW</sequence>
<gene>
    <name evidence="1" type="primary">atpA</name>
    <name type="ordered locus">PFLU_6120</name>
</gene>
<evidence type="ECO:0000255" key="1">
    <source>
        <dbReference type="HAMAP-Rule" id="MF_01346"/>
    </source>
</evidence>
<reference key="1">
    <citation type="journal article" date="2009" name="Genome Biol.">
        <title>Genomic and genetic analyses of diversity and plant interactions of Pseudomonas fluorescens.</title>
        <authorList>
            <person name="Silby M.W."/>
            <person name="Cerdeno-Tarraga A.M."/>
            <person name="Vernikos G.S."/>
            <person name="Giddens S.R."/>
            <person name="Jackson R.W."/>
            <person name="Preston G.M."/>
            <person name="Zhang X.-X."/>
            <person name="Moon C.D."/>
            <person name="Gehrig S.M."/>
            <person name="Godfrey S.A.C."/>
            <person name="Knight C.G."/>
            <person name="Malone J.G."/>
            <person name="Robinson Z."/>
            <person name="Spiers A.J."/>
            <person name="Harris S."/>
            <person name="Challis G.L."/>
            <person name="Yaxley A.M."/>
            <person name="Harris D."/>
            <person name="Seeger K."/>
            <person name="Murphy L."/>
            <person name="Rutter S."/>
            <person name="Squares R."/>
            <person name="Quail M.A."/>
            <person name="Saunders E."/>
            <person name="Mavromatis K."/>
            <person name="Brettin T.S."/>
            <person name="Bentley S.D."/>
            <person name="Hothersall J."/>
            <person name="Stephens E."/>
            <person name="Thomas C.M."/>
            <person name="Parkhill J."/>
            <person name="Levy S.B."/>
            <person name="Rainey P.B."/>
            <person name="Thomson N.R."/>
        </authorList>
    </citation>
    <scope>NUCLEOTIDE SEQUENCE [LARGE SCALE GENOMIC DNA]</scope>
    <source>
        <strain>SBW25</strain>
    </source>
</reference>
<proteinExistence type="inferred from homology"/>
<accession>C3K1E8</accession>
<name>ATPA_PSEFS</name>
<protein>
    <recommendedName>
        <fullName evidence="1">ATP synthase subunit alpha</fullName>
        <ecNumber evidence="1">7.1.2.2</ecNumber>
    </recommendedName>
    <alternativeName>
        <fullName evidence="1">ATP synthase F1 sector subunit alpha</fullName>
    </alternativeName>
    <alternativeName>
        <fullName evidence="1">F-ATPase subunit alpha</fullName>
    </alternativeName>
</protein>
<feature type="chain" id="PRO_1000214814" description="ATP synthase subunit alpha">
    <location>
        <begin position="1"/>
        <end position="514"/>
    </location>
</feature>
<feature type="binding site" evidence="1">
    <location>
        <begin position="170"/>
        <end position="177"/>
    </location>
    <ligand>
        <name>ATP</name>
        <dbReference type="ChEBI" id="CHEBI:30616"/>
    </ligand>
</feature>
<feature type="site" description="Required for activity" evidence="1">
    <location>
        <position position="374"/>
    </location>
</feature>